<accession>P9WGM6</accession>
<accession>L0TES0</accession>
<accession>P0A5Z4</accession>
<accession>Q50447</accession>
<name>MTRA_MYCTO</name>
<evidence type="ECO:0000250" key="1"/>
<evidence type="ECO:0000255" key="2">
    <source>
        <dbReference type="PROSITE-ProRule" id="PRU00169"/>
    </source>
</evidence>
<evidence type="ECO:0000255" key="3">
    <source>
        <dbReference type="PROSITE-ProRule" id="PRU01091"/>
    </source>
</evidence>
<evidence type="ECO:0000305" key="4"/>
<proteinExistence type="inferred from homology"/>
<feature type="chain" id="PRO_0000428335" description="DNA-binding response regulator MtrA">
    <location>
        <begin position="1"/>
        <end position="228"/>
    </location>
</feature>
<feature type="domain" description="Response regulatory" evidence="2">
    <location>
        <begin position="7"/>
        <end position="120"/>
    </location>
</feature>
<feature type="DNA-binding region" description="OmpR/PhoB-type" evidence="3">
    <location>
        <begin position="128"/>
        <end position="227"/>
    </location>
</feature>
<feature type="binding site" evidence="1">
    <location>
        <position position="13"/>
    </location>
    <ligand>
        <name>a divalent metal cation</name>
        <dbReference type="ChEBI" id="CHEBI:60240"/>
    </ligand>
</feature>
<feature type="binding site" evidence="1">
    <location>
        <position position="56"/>
    </location>
    <ligand>
        <name>a divalent metal cation</name>
        <dbReference type="ChEBI" id="CHEBI:60240"/>
    </ligand>
</feature>
<feature type="binding site" evidence="1">
    <location>
        <position position="59"/>
    </location>
    <ligand>
        <name>a divalent metal cation</name>
        <dbReference type="ChEBI" id="CHEBI:60240"/>
    </ligand>
</feature>
<feature type="modified residue" description="4-aspartylphosphate" evidence="2">
    <location>
        <position position="56"/>
    </location>
</feature>
<keyword id="KW-0963">Cytoplasm</keyword>
<keyword id="KW-0238">DNA-binding</keyword>
<keyword id="KW-0479">Metal-binding</keyword>
<keyword id="KW-0597">Phosphoprotein</keyword>
<keyword id="KW-1185">Reference proteome</keyword>
<keyword id="KW-0804">Transcription</keyword>
<keyword id="KW-0805">Transcription regulation</keyword>
<keyword id="KW-0902">Two-component regulatory system</keyword>
<comment type="function">
    <text evidence="1">Member of the two-component regulatory system MtrA/MtrB.</text>
</comment>
<comment type="cofactor">
    <cofactor evidence="1">
        <name>a divalent metal cation</name>
        <dbReference type="ChEBI" id="CHEBI:60240"/>
    </cofactor>
</comment>
<comment type="subunit">
    <text evidence="1">Probably a monomer when inactive, phosphorylation may permit it to oligomerize. It can oligomerize, and interacts with MrtB (By similarity).</text>
</comment>
<comment type="subcellular location">
    <subcellularLocation>
        <location evidence="1">Cytoplasm</location>
    </subcellularLocation>
</comment>
<comment type="PTM">
    <text evidence="1">Phosphorylated by MtrB.</text>
</comment>
<comment type="sequence caution" evidence="4">
    <conflict type="erroneous initiation">
        <sequence resource="EMBL-CDS" id="AAK47686"/>
    </conflict>
    <text>Extended N-terminus.</text>
</comment>
<gene>
    <name type="primary">mtrA</name>
    <name type="ordered locus">MT3344</name>
</gene>
<sequence length="228" mass="25279">MDTMRQRILVVDDDASLAEMLTIVLRGEGFDTAVIGDGTQALTAVRELRPDLVLLDLMLPGMNGIDVCRVLRADSGVPIVMLTAKTDTVDVVLGLESGADDYIMKPFKPKELVARVRARLRRNDDEPAEMLSIADVEIDVPAHKVTRNGEQISLTPLEFDLLVALARKPRQVFTRDVLLEQVWGYRHPADTRLVNVHVQRLRAKVEKDPENPTVVLTVRGVGYKAGPP</sequence>
<organism>
    <name type="scientific">Mycobacterium tuberculosis (strain CDC 1551 / Oshkosh)</name>
    <dbReference type="NCBI Taxonomy" id="83331"/>
    <lineage>
        <taxon>Bacteria</taxon>
        <taxon>Bacillati</taxon>
        <taxon>Actinomycetota</taxon>
        <taxon>Actinomycetes</taxon>
        <taxon>Mycobacteriales</taxon>
        <taxon>Mycobacteriaceae</taxon>
        <taxon>Mycobacterium</taxon>
        <taxon>Mycobacterium tuberculosis complex</taxon>
    </lineage>
</organism>
<protein>
    <recommendedName>
        <fullName>DNA-binding response regulator MtrA</fullName>
    </recommendedName>
</protein>
<reference key="1">
    <citation type="journal article" date="2002" name="J. Bacteriol.">
        <title>Whole-genome comparison of Mycobacterium tuberculosis clinical and laboratory strains.</title>
        <authorList>
            <person name="Fleischmann R.D."/>
            <person name="Alland D."/>
            <person name="Eisen J.A."/>
            <person name="Carpenter L."/>
            <person name="White O."/>
            <person name="Peterson J.D."/>
            <person name="DeBoy R.T."/>
            <person name="Dodson R.J."/>
            <person name="Gwinn M.L."/>
            <person name="Haft D.H."/>
            <person name="Hickey E.K."/>
            <person name="Kolonay J.F."/>
            <person name="Nelson W.C."/>
            <person name="Umayam L.A."/>
            <person name="Ermolaeva M.D."/>
            <person name="Salzberg S.L."/>
            <person name="Delcher A."/>
            <person name="Utterback T.R."/>
            <person name="Weidman J.F."/>
            <person name="Khouri H.M."/>
            <person name="Gill J."/>
            <person name="Mikula A."/>
            <person name="Bishai W."/>
            <person name="Jacobs W.R. Jr."/>
            <person name="Venter J.C."/>
            <person name="Fraser C.M."/>
        </authorList>
    </citation>
    <scope>NUCLEOTIDE SEQUENCE [LARGE SCALE GENOMIC DNA]</scope>
    <source>
        <strain>CDC 1551 / Oshkosh</strain>
    </source>
</reference>
<dbReference type="EMBL" id="AE000516">
    <property type="protein sequence ID" value="AAK47686.1"/>
    <property type="status" value="ALT_INIT"/>
    <property type="molecule type" value="Genomic_DNA"/>
</dbReference>
<dbReference type="PIR" id="H70592">
    <property type="entry name" value="H70592"/>
</dbReference>
<dbReference type="RefSeq" id="WP_003899985.1">
    <property type="nucleotide sequence ID" value="NZ_KK341227.1"/>
</dbReference>
<dbReference type="SMR" id="P9WGM6"/>
<dbReference type="GeneID" id="45427240"/>
<dbReference type="KEGG" id="mtc:MT3344"/>
<dbReference type="PATRIC" id="fig|83331.31.peg.3600"/>
<dbReference type="HOGENOM" id="CLU_000445_30_4_11"/>
<dbReference type="Proteomes" id="UP000001020">
    <property type="component" value="Chromosome"/>
</dbReference>
<dbReference type="GO" id="GO:0005829">
    <property type="term" value="C:cytosol"/>
    <property type="evidence" value="ECO:0007669"/>
    <property type="project" value="TreeGrafter"/>
</dbReference>
<dbReference type="GO" id="GO:0032993">
    <property type="term" value="C:protein-DNA complex"/>
    <property type="evidence" value="ECO:0007669"/>
    <property type="project" value="TreeGrafter"/>
</dbReference>
<dbReference type="GO" id="GO:0046872">
    <property type="term" value="F:metal ion binding"/>
    <property type="evidence" value="ECO:0007669"/>
    <property type="project" value="UniProtKB-KW"/>
</dbReference>
<dbReference type="GO" id="GO:0000156">
    <property type="term" value="F:phosphorelay response regulator activity"/>
    <property type="evidence" value="ECO:0007669"/>
    <property type="project" value="InterPro"/>
</dbReference>
<dbReference type="GO" id="GO:0000976">
    <property type="term" value="F:transcription cis-regulatory region binding"/>
    <property type="evidence" value="ECO:0007669"/>
    <property type="project" value="InterPro"/>
</dbReference>
<dbReference type="GO" id="GO:0045893">
    <property type="term" value="P:positive regulation of DNA-templated transcription"/>
    <property type="evidence" value="ECO:0007669"/>
    <property type="project" value="InterPro"/>
</dbReference>
<dbReference type="CDD" id="cd17626">
    <property type="entry name" value="REC_OmpR_MtrA-like"/>
    <property type="match status" value="1"/>
</dbReference>
<dbReference type="CDD" id="cd00383">
    <property type="entry name" value="trans_reg_C"/>
    <property type="match status" value="1"/>
</dbReference>
<dbReference type="FunFam" id="1.10.10.10:FF:000033">
    <property type="entry name" value="DNA-binding response regulator MtrA"/>
    <property type="match status" value="1"/>
</dbReference>
<dbReference type="FunFam" id="3.40.50.2300:FF:000001">
    <property type="entry name" value="DNA-binding response regulator PhoB"/>
    <property type="match status" value="1"/>
</dbReference>
<dbReference type="Gene3D" id="3.40.50.2300">
    <property type="match status" value="1"/>
</dbReference>
<dbReference type="Gene3D" id="6.10.250.690">
    <property type="match status" value="1"/>
</dbReference>
<dbReference type="Gene3D" id="1.10.10.10">
    <property type="entry name" value="Winged helix-like DNA-binding domain superfamily/Winged helix DNA-binding domain"/>
    <property type="match status" value="1"/>
</dbReference>
<dbReference type="InterPro" id="IPR011006">
    <property type="entry name" value="CheY-like_superfamily"/>
</dbReference>
<dbReference type="InterPro" id="IPR047673">
    <property type="entry name" value="MtrA_REC"/>
</dbReference>
<dbReference type="InterPro" id="IPR047671">
    <property type="entry name" value="MtrAB_MtrA"/>
</dbReference>
<dbReference type="InterPro" id="IPR001867">
    <property type="entry name" value="OmpR/PhoB-type_DNA-bd"/>
</dbReference>
<dbReference type="InterPro" id="IPR001789">
    <property type="entry name" value="Sig_transdc_resp-reg_receiver"/>
</dbReference>
<dbReference type="InterPro" id="IPR039420">
    <property type="entry name" value="WalR-like"/>
</dbReference>
<dbReference type="InterPro" id="IPR036388">
    <property type="entry name" value="WH-like_DNA-bd_sf"/>
</dbReference>
<dbReference type="NCBIfam" id="NF040689">
    <property type="entry name" value="MtrAB_MtrA"/>
    <property type="match status" value="1"/>
</dbReference>
<dbReference type="PANTHER" id="PTHR48111:SF21">
    <property type="entry name" value="DNA-BINDING DUAL MASTER TRANSCRIPTIONAL REGULATOR RPAA"/>
    <property type="match status" value="1"/>
</dbReference>
<dbReference type="PANTHER" id="PTHR48111">
    <property type="entry name" value="REGULATOR OF RPOS"/>
    <property type="match status" value="1"/>
</dbReference>
<dbReference type="Pfam" id="PF00072">
    <property type="entry name" value="Response_reg"/>
    <property type="match status" value="1"/>
</dbReference>
<dbReference type="Pfam" id="PF00486">
    <property type="entry name" value="Trans_reg_C"/>
    <property type="match status" value="1"/>
</dbReference>
<dbReference type="SMART" id="SM00448">
    <property type="entry name" value="REC"/>
    <property type="match status" value="1"/>
</dbReference>
<dbReference type="SMART" id="SM00862">
    <property type="entry name" value="Trans_reg_C"/>
    <property type="match status" value="1"/>
</dbReference>
<dbReference type="SUPFAM" id="SSF52172">
    <property type="entry name" value="CheY-like"/>
    <property type="match status" value="1"/>
</dbReference>
<dbReference type="PROSITE" id="PS51755">
    <property type="entry name" value="OMPR_PHOB"/>
    <property type="match status" value="1"/>
</dbReference>
<dbReference type="PROSITE" id="PS50110">
    <property type="entry name" value="RESPONSE_REGULATORY"/>
    <property type="match status" value="1"/>
</dbReference>